<sequence length="287" mass="32528">MKIKKAIIPAAGLGTRFLPATKAMPKEMLPILDKPTIQYIVEEAVAAGIEDIIIVTGKHKRAIEDHFDNQKELEMILEEKGKSDLLQSVKYSSNLANMFYVRQKEQKGLGHAIWTARQFIGNEPFAVLLGDDIVQADTPAIKQLMNQYETTGKSIIGVQQVNEIETHRYGIVDPEESYNELFSVNKFVEKPEIGTAPSNLAIMGRYVLKPDIFDYLERQEIGRGGEIQLTDAIEHLNSEDCVYAYNFEGERYDVGEKIGFVKTTIQFALKDDYMKKEITEFIKSINK</sequence>
<keyword id="KW-0119">Carbohydrate metabolism</keyword>
<keyword id="KW-0548">Nucleotidyltransferase</keyword>
<keyword id="KW-1185">Reference proteome</keyword>
<keyword id="KW-0808">Transferase</keyword>
<evidence type="ECO:0000250" key="1"/>
<evidence type="ECO:0000305" key="2"/>
<protein>
    <recommendedName>
        <fullName>UTP--glucose-1-phosphate uridylyltransferase 1</fullName>
        <ecNumber>2.7.7.9</ecNumber>
    </recommendedName>
    <alternativeName>
        <fullName>Alpha-D-glucosyl-1-phosphate uridylyltransferase 1</fullName>
    </alternativeName>
    <alternativeName>
        <fullName>UDP-glucose pyrophosphorylase 1</fullName>
        <shortName>UDPGP 1</shortName>
    </alternativeName>
    <alternativeName>
        <fullName>Uridine diphosphoglucose pyrophosphorylase 1</fullName>
    </alternativeName>
</protein>
<dbReference type="EC" id="2.7.7.9"/>
<dbReference type="EMBL" id="AP008934">
    <property type="protein sequence ID" value="BAE17204.1"/>
    <property type="molecule type" value="Genomic_DNA"/>
</dbReference>
<dbReference type="RefSeq" id="WP_011302060.1">
    <property type="nucleotide sequence ID" value="NC_007350.1"/>
</dbReference>
<dbReference type="SMR" id="Q4A122"/>
<dbReference type="GeneID" id="3617264"/>
<dbReference type="KEGG" id="ssp:SSP0059"/>
<dbReference type="eggNOG" id="COG1210">
    <property type="taxonomic scope" value="Bacteria"/>
</dbReference>
<dbReference type="HOGENOM" id="CLU_029499_1_2_9"/>
<dbReference type="UniPathway" id="UPA00894"/>
<dbReference type="Proteomes" id="UP000006371">
    <property type="component" value="Chromosome"/>
</dbReference>
<dbReference type="GO" id="GO:0003983">
    <property type="term" value="F:UTP:glucose-1-phosphate uridylyltransferase activity"/>
    <property type="evidence" value="ECO:0007669"/>
    <property type="project" value="UniProtKB-EC"/>
</dbReference>
<dbReference type="GO" id="GO:0009246">
    <property type="term" value="P:enterobacterial common antigen biosynthetic process"/>
    <property type="evidence" value="ECO:0007669"/>
    <property type="project" value="UniProtKB-UniPathway"/>
</dbReference>
<dbReference type="GO" id="GO:0006011">
    <property type="term" value="P:UDP-alpha-D-glucose metabolic process"/>
    <property type="evidence" value="ECO:0007669"/>
    <property type="project" value="InterPro"/>
</dbReference>
<dbReference type="CDD" id="cd02541">
    <property type="entry name" value="UGPase_prokaryotic"/>
    <property type="match status" value="1"/>
</dbReference>
<dbReference type="FunFam" id="3.90.550.10:FF:000045">
    <property type="entry name" value="UTP--glucose-1-phosphate uridylyltransferase"/>
    <property type="match status" value="1"/>
</dbReference>
<dbReference type="Gene3D" id="3.90.550.10">
    <property type="entry name" value="Spore Coat Polysaccharide Biosynthesis Protein SpsA, Chain A"/>
    <property type="match status" value="1"/>
</dbReference>
<dbReference type="InterPro" id="IPR005771">
    <property type="entry name" value="GalU_uridylyltTrfase_bac/arc"/>
</dbReference>
<dbReference type="InterPro" id="IPR005835">
    <property type="entry name" value="NTP_transferase_dom"/>
</dbReference>
<dbReference type="InterPro" id="IPR029044">
    <property type="entry name" value="Nucleotide-diphossugar_trans"/>
</dbReference>
<dbReference type="NCBIfam" id="TIGR01099">
    <property type="entry name" value="galU"/>
    <property type="match status" value="1"/>
</dbReference>
<dbReference type="PANTHER" id="PTHR43197">
    <property type="entry name" value="UTP--GLUCOSE-1-PHOSPHATE URIDYLYLTRANSFERASE"/>
    <property type="match status" value="1"/>
</dbReference>
<dbReference type="PANTHER" id="PTHR43197:SF1">
    <property type="entry name" value="UTP--GLUCOSE-1-PHOSPHATE URIDYLYLTRANSFERASE"/>
    <property type="match status" value="1"/>
</dbReference>
<dbReference type="Pfam" id="PF00483">
    <property type="entry name" value="NTP_transferase"/>
    <property type="match status" value="1"/>
</dbReference>
<dbReference type="SUPFAM" id="SSF53448">
    <property type="entry name" value="Nucleotide-diphospho-sugar transferases"/>
    <property type="match status" value="1"/>
</dbReference>
<organism>
    <name type="scientific">Staphylococcus saprophyticus subsp. saprophyticus (strain ATCC 15305 / DSM 20229 / NCIMB 8711 / NCTC 7292 / S-41)</name>
    <dbReference type="NCBI Taxonomy" id="342451"/>
    <lineage>
        <taxon>Bacteria</taxon>
        <taxon>Bacillati</taxon>
        <taxon>Bacillota</taxon>
        <taxon>Bacilli</taxon>
        <taxon>Bacillales</taxon>
        <taxon>Staphylococcaceae</taxon>
        <taxon>Staphylococcus</taxon>
    </lineage>
</organism>
<accession>Q4A122</accession>
<reference key="1">
    <citation type="journal article" date="2005" name="Proc. Natl. Acad. Sci. U.S.A.">
        <title>Whole genome sequence of Staphylococcus saprophyticus reveals the pathogenesis of uncomplicated urinary tract infection.</title>
        <authorList>
            <person name="Kuroda M."/>
            <person name="Yamashita A."/>
            <person name="Hirakawa H."/>
            <person name="Kumano M."/>
            <person name="Morikawa K."/>
            <person name="Higashide M."/>
            <person name="Maruyama A."/>
            <person name="Inose Y."/>
            <person name="Matoba K."/>
            <person name="Toh H."/>
            <person name="Kuhara S."/>
            <person name="Hattori M."/>
            <person name="Ohta T."/>
        </authorList>
    </citation>
    <scope>NUCLEOTIDE SEQUENCE [LARGE SCALE GENOMIC DNA]</scope>
    <source>
        <strain>ATCC 15305 / DSM 20229 / NCIMB 8711 / NCTC 7292 / S-41</strain>
    </source>
</reference>
<comment type="function">
    <text evidence="1">Catalyzes the formation of UDP-glucose from glucose-1-phosphate and UTP. This is an intermediate step in the biosynthesis of diglucosyl-diacylglycerol (Glc2-DAG), i.e. a glycolipid found in the membrane, which is also used as a membrane anchor for lipoteichoic acid (LTA) (By similarity).</text>
</comment>
<comment type="catalytic activity">
    <reaction>
        <text>alpha-D-glucose 1-phosphate + UTP + H(+) = UDP-alpha-D-glucose + diphosphate</text>
        <dbReference type="Rhea" id="RHEA:19889"/>
        <dbReference type="ChEBI" id="CHEBI:15378"/>
        <dbReference type="ChEBI" id="CHEBI:33019"/>
        <dbReference type="ChEBI" id="CHEBI:46398"/>
        <dbReference type="ChEBI" id="CHEBI:58601"/>
        <dbReference type="ChEBI" id="CHEBI:58885"/>
        <dbReference type="EC" id="2.7.7.9"/>
    </reaction>
</comment>
<comment type="pathway">
    <text>Glycolipid metabolism; diglucosyl-diacylglycerol biosynthesis.</text>
</comment>
<comment type="similarity">
    <text evidence="2">Belongs to the UDPGP type 2 family.</text>
</comment>
<proteinExistence type="inferred from homology"/>
<feature type="chain" id="PRO_0000308313" description="UTP--glucose-1-phosphate uridylyltransferase 1">
    <location>
        <begin position="1"/>
        <end position="287"/>
    </location>
</feature>
<name>GTAB1_STAS1</name>
<gene>
    <name type="primary">gtaB1</name>
    <name type="ordered locus">SSP0059</name>
</gene>